<organismHost>
    <name type="scientific">Acheta domesticus</name>
    <name type="common">House cricket</name>
    <dbReference type="NCBI Taxonomy" id="6997"/>
</organismHost>
<organismHost>
    <name type="scientific">Chilo suppressalis</name>
    <name type="common">Asiatic rice borer moth</name>
    <dbReference type="NCBI Taxonomy" id="168631"/>
</organismHost>
<organismHost>
    <name type="scientific">Gryllus bimaculatus</name>
    <name type="common">Two-spotted cricket</name>
    <dbReference type="NCBI Taxonomy" id="6999"/>
</organismHost>
<organismHost>
    <name type="scientific">Gryllus campestris</name>
    <dbReference type="NCBI Taxonomy" id="58607"/>
</organismHost>
<organismHost>
    <name type="scientific">Spodoptera frugiperda</name>
    <name type="common">Fall armyworm</name>
    <dbReference type="NCBI Taxonomy" id="7108"/>
</organismHost>
<dbReference type="EMBL" id="AF303741">
    <property type="protein sequence ID" value="AAK82245.1"/>
    <property type="molecule type" value="Genomic_DNA"/>
</dbReference>
<dbReference type="RefSeq" id="NP_149848.1">
    <property type="nucleotide sequence ID" value="NC_003038.1"/>
</dbReference>
<dbReference type="KEGG" id="vg:1733210"/>
<dbReference type="Proteomes" id="UP000001359">
    <property type="component" value="Genome"/>
</dbReference>
<protein>
    <recommendedName>
        <fullName>Uncharacterized protein 385L</fullName>
    </recommendedName>
</protein>
<sequence length="254" mass="28243">MNISKTKSVSLVYEDLNKIVNEIVSKQFRSRHPDGDSDIDLQHLFSIINLKNPENDNDATNKQFVLTSIRDDTIHVNRKGDIMHGNLDMGGNFFVTNVNDKEMNPPDTHAATVGYVNRKIASYIPKANLNIICSQGFKGKKGITSRTDDIYKFFPAGVVLPTDAIIEKISLTTTNDTVENSKHKLTIKISDPLNSGDVQTETVFEKLGSQLYFSQQFRKPVGNKKISFQLDSFVDSAPVAIFAGESTLTLEISV</sequence>
<name>385L_IIV6</name>
<accession>Q91FD9</accession>
<reference key="1">
    <citation type="journal article" date="2001" name="Virology">
        <title>Analysis of the first complete DNA sequence of an invertebrate iridovirus: coding strategy of the genome of Chilo iridescent virus.</title>
        <authorList>
            <person name="Jakob N.J."/>
            <person name="Mueller K."/>
            <person name="Bahr U."/>
            <person name="Darai G."/>
        </authorList>
    </citation>
    <scope>NUCLEOTIDE SEQUENCE [LARGE SCALE GENOMIC DNA]</scope>
</reference>
<reference key="2">
    <citation type="journal article" date="2007" name="Virol. J.">
        <title>Comparative genomic analysis of the family Iridoviridae: re-annotating and defining the core set of iridovirus genes.</title>
        <authorList>
            <person name="Eaton H.E."/>
            <person name="Metcalf J."/>
            <person name="Penny E."/>
            <person name="Tcherepanov V."/>
            <person name="Upton C."/>
            <person name="Brunetti C.R."/>
        </authorList>
    </citation>
    <scope>GENOME REANNOTATION</scope>
</reference>
<keyword id="KW-1185">Reference proteome</keyword>
<proteinExistence type="predicted"/>
<gene>
    <name type="ORF">IIV6-385L</name>
</gene>
<organism>
    <name type="scientific">Invertebrate iridescent virus 6</name>
    <name type="common">IIV-6</name>
    <name type="synonym">Chilo iridescent virus</name>
    <dbReference type="NCBI Taxonomy" id="176652"/>
    <lineage>
        <taxon>Viruses</taxon>
        <taxon>Varidnaviria</taxon>
        <taxon>Bamfordvirae</taxon>
        <taxon>Nucleocytoviricota</taxon>
        <taxon>Megaviricetes</taxon>
        <taxon>Pimascovirales</taxon>
        <taxon>Iridoviridae</taxon>
        <taxon>Betairidovirinae</taxon>
        <taxon>Iridovirus</taxon>
    </lineage>
</organism>
<feature type="chain" id="PRO_0000377877" description="Uncharacterized protein 385L">
    <location>
        <begin position="1"/>
        <end position="254"/>
    </location>
</feature>